<comment type="function">
    <text evidence="2 3 4 5">Potent platelet activator that acts via GPIb (GP1BA/GP1BB) (PubMed:15175804). After activation by the toxin, the receptor is redistributed on platelet surface thanks to cytoskeletal translocation. The indirect activation of integrin alpha-IIb/beta-3 (ITGA2B/ITGB3) also induced by the toxin is downstream the cytoskeletal translocation of GPIb (PubMed:16102113).</text>
</comment>
<comment type="subunit">
    <text evidence="2">Dimer and tetramer of heterodimers of alpha and beta subunits ((alphabeta)(2) and (alphabeta)(4)); disulfide-linked. These two multimeric forms are found.</text>
</comment>
<comment type="subcellular location">
    <subcellularLocation>
        <location>Secreted</location>
    </subcellularLocation>
</comment>
<comment type="tissue specificity">
    <text>Expressed by the venom gland.</text>
</comment>
<comment type="PTM">
    <text evidence="2">The complex is glycosylated.</text>
</comment>
<comment type="mass spectrometry" mass="14873.0" method="Unknown" evidence="2"/>
<comment type="miscellaneous">
    <text evidence="7">Negative results: does not act by binding GPVI (GP6) and integrin alpha-2/beta-1 (ITGA2/ITGB1) (PubMed:15175804, PubMed:15501291). Does not bind to platelet GPIX (GP9), GPIIb (ITGA2B), and GPIIIa (ITGB3) (PubMed:15501291).</text>
</comment>
<comment type="similarity">
    <text evidence="6">Belongs to the snaclec family.</text>
</comment>
<keyword id="KW-0903">Direct protein sequencing</keyword>
<keyword id="KW-1015">Disulfide bond</keyword>
<keyword id="KW-0325">Glycoprotein</keyword>
<keyword id="KW-1199">Hemostasis impairing toxin</keyword>
<keyword id="KW-1202">Platelet aggregation activating toxin</keyword>
<keyword id="KW-0964">Secreted</keyword>
<keyword id="KW-0732">Signal</keyword>
<keyword id="KW-0800">Toxin</keyword>
<dbReference type="EMBL" id="AY099322">
    <property type="protein sequence ID" value="AAM43809.1"/>
    <property type="molecule type" value="mRNA"/>
</dbReference>
<dbReference type="SMR" id="Q8JGT6"/>
<dbReference type="GO" id="GO:0005576">
    <property type="term" value="C:extracellular region"/>
    <property type="evidence" value="ECO:0007669"/>
    <property type="project" value="UniProtKB-SubCell"/>
</dbReference>
<dbReference type="GO" id="GO:0090729">
    <property type="term" value="F:toxin activity"/>
    <property type="evidence" value="ECO:0007669"/>
    <property type="project" value="UniProtKB-KW"/>
</dbReference>
<dbReference type="FunFam" id="3.10.100.10:FF:000087">
    <property type="entry name" value="Snaclec rhodocetin subunit delta"/>
    <property type="match status" value="1"/>
</dbReference>
<dbReference type="Gene3D" id="3.10.100.10">
    <property type="entry name" value="Mannose-Binding Protein A, subunit A"/>
    <property type="match status" value="1"/>
</dbReference>
<dbReference type="InterPro" id="IPR001304">
    <property type="entry name" value="C-type_lectin-like"/>
</dbReference>
<dbReference type="InterPro" id="IPR016186">
    <property type="entry name" value="C-type_lectin-like/link_sf"/>
</dbReference>
<dbReference type="InterPro" id="IPR050111">
    <property type="entry name" value="C-type_lectin/snaclec_domain"/>
</dbReference>
<dbReference type="InterPro" id="IPR018378">
    <property type="entry name" value="C-type_lectin_CS"/>
</dbReference>
<dbReference type="InterPro" id="IPR016187">
    <property type="entry name" value="CTDL_fold"/>
</dbReference>
<dbReference type="PANTHER" id="PTHR22803">
    <property type="entry name" value="MANNOSE, PHOSPHOLIPASE, LECTIN RECEPTOR RELATED"/>
    <property type="match status" value="1"/>
</dbReference>
<dbReference type="Pfam" id="PF00059">
    <property type="entry name" value="Lectin_C"/>
    <property type="match status" value="1"/>
</dbReference>
<dbReference type="PRINTS" id="PR01504">
    <property type="entry name" value="PNCREATITSAP"/>
</dbReference>
<dbReference type="SMART" id="SM00034">
    <property type="entry name" value="CLECT"/>
    <property type="match status" value="1"/>
</dbReference>
<dbReference type="SUPFAM" id="SSF56436">
    <property type="entry name" value="C-type lectin-like"/>
    <property type="match status" value="1"/>
</dbReference>
<dbReference type="PROSITE" id="PS00615">
    <property type="entry name" value="C_TYPE_LECTIN_1"/>
    <property type="match status" value="1"/>
</dbReference>
<dbReference type="PROSITE" id="PS50041">
    <property type="entry name" value="C_TYPE_LECTIN_2"/>
    <property type="match status" value="1"/>
</dbReference>
<feature type="signal peptide" evidence="2">
    <location>
        <begin position="1"/>
        <end position="23"/>
    </location>
</feature>
<feature type="chain" id="PRO_0000355296" description="Snaclec mucetin subunit beta">
    <location>
        <begin position="24"/>
        <end position="146"/>
    </location>
</feature>
<feature type="domain" description="C-type lectin" evidence="1">
    <location>
        <begin position="34"/>
        <end position="145"/>
    </location>
</feature>
<feature type="disulfide bond" description="Interchain (with C-158 in subunit alpha of multimeric partner)" evidence="1">
    <location>
        <position position="26"/>
    </location>
</feature>
<feature type="disulfide bond" evidence="1">
    <location>
        <begin position="27"/>
        <end position="38"/>
    </location>
</feature>
<feature type="disulfide bond" evidence="1">
    <location>
        <begin position="55"/>
        <end position="144"/>
    </location>
</feature>
<feature type="disulfide bond" description="Interchain (with C-104 in subunit alpha of heterodimeric partner)" evidence="1">
    <location>
        <position position="100"/>
    </location>
</feature>
<feature type="disulfide bond" evidence="1">
    <location>
        <begin position="121"/>
        <end position="136"/>
    </location>
</feature>
<organism>
    <name type="scientific">Protobothrops mucrosquamatus</name>
    <name type="common">Taiwan habu</name>
    <name type="synonym">Trimeresurus mucrosquamatus</name>
    <dbReference type="NCBI Taxonomy" id="103944"/>
    <lineage>
        <taxon>Eukaryota</taxon>
        <taxon>Metazoa</taxon>
        <taxon>Chordata</taxon>
        <taxon>Craniata</taxon>
        <taxon>Vertebrata</taxon>
        <taxon>Euteleostomi</taxon>
        <taxon>Lepidosauria</taxon>
        <taxon>Squamata</taxon>
        <taxon>Bifurcata</taxon>
        <taxon>Unidentata</taxon>
        <taxon>Episquamata</taxon>
        <taxon>Toxicofera</taxon>
        <taxon>Serpentes</taxon>
        <taxon>Colubroidea</taxon>
        <taxon>Viperidae</taxon>
        <taxon>Crotalinae</taxon>
        <taxon>Protobothrops</taxon>
    </lineage>
</organism>
<sequence length="146" mass="16783">MGRFIFVSFGLLVVFISLSGTEAGFCCPLGWSSYDEHCYQVFQQKMNWEDAEKFCTQQHTGSHLVSYESSEEVDFVVSKTLPILKASFVWIGLSNVWNACRLQWSDGTELMYNAWTAESECIASKTTDNQWWSMDCSSKRYVVCKF</sequence>
<proteinExistence type="evidence at protein level"/>
<protein>
    <recommendedName>
        <fullName>Snaclec mucetin subunit beta</fullName>
    </recommendedName>
    <alternativeName>
        <fullName>Trimeresurus mucrosquamatus venom activator subunit beta</fullName>
        <shortName>TMVA subunit beta</shortName>
    </alternativeName>
</protein>
<accession>Q8JGT6</accession>
<reference key="1">
    <citation type="journal article" date="2002" name="Toxicon">
        <title>Purification and cloning of a novel C-type lectin-like protein with platelet aggregation activity from Trimeresurus mucrosquamatus venom.</title>
        <authorList>
            <person name="Wei Q."/>
            <person name="Lu Q.-M."/>
            <person name="Jin Y."/>
            <person name="Li R."/>
            <person name="Wei J.-F."/>
            <person name="Wang W.-Y."/>
            <person name="Xiong Y.-L."/>
        </authorList>
    </citation>
    <scope>NUCLEOTIDE SEQUENCE [MRNA]</scope>
    <scope>PROTEIN SEQUENCE OF 24-58</scope>
    <scope>FUNCTION</scope>
    <scope>SUBUNIT</scope>
    <scope>MASS SPECTROMETRY</scope>
    <source>
        <tissue>Venom</tissue>
        <tissue>Venom gland</tissue>
    </source>
</reference>
<reference key="2">
    <citation type="journal article" date="2004" name="Thromb. Haemost.">
        <title>GPIb is involved in platelet aggregation induced by mucetin, a snake C-type lectin protein from Chinese habu (Trimeresurus mucrosquamatus) venom.</title>
        <authorList>
            <person name="Lu Q."/>
            <person name="Navdaev A."/>
            <person name="Clemetson J.M."/>
            <person name="Clemetson K.J."/>
        </authorList>
    </citation>
    <scope>FUNCTION</scope>
    <source>
        <tissue>Venom</tissue>
    </source>
</reference>
<reference key="3">
    <citation type="journal article" date="2004" name="Toxicon">
        <title>TMVA, a snake C-type lectin-like protein from Trimeresurus mucrosquamatus venom, activates platelet via GPIb.</title>
        <authorList>
            <person name="Tai H."/>
            <person name="Wei Q."/>
            <person name="Jin Y."/>
            <person name="Su M."/>
            <person name="Song J.X."/>
            <person name="Zhou X.D."/>
            <person name="Ouyang H.M."/>
            <person name="Wang W.Y."/>
            <person name="Xiong Y.L."/>
            <person name="Zhang Y."/>
        </authorList>
    </citation>
    <scope>FUNCTION</scope>
</reference>
<reference key="4">
    <citation type="journal article" date="2005" name="J. Thromb. Haemost.">
        <title>Translocation of GPIb and Fc receptor gamma-chain to cytoskeleton in mucetin-activated platelets.</title>
        <authorList>
            <person name="Lu Q."/>
            <person name="Clemetson J.M."/>
            <person name="Clemetson K.J."/>
        </authorList>
    </citation>
    <scope>FUNCTION</scope>
</reference>
<evidence type="ECO:0000255" key="1">
    <source>
        <dbReference type="PROSITE-ProRule" id="PRU00040"/>
    </source>
</evidence>
<evidence type="ECO:0000269" key="2">
    <source>
    </source>
</evidence>
<evidence type="ECO:0000269" key="3">
    <source>
    </source>
</evidence>
<evidence type="ECO:0000269" key="4">
    <source>
    </source>
</evidence>
<evidence type="ECO:0000269" key="5">
    <source>
    </source>
</evidence>
<evidence type="ECO:0000305" key="6"/>
<evidence type="ECO:0000305" key="7">
    <source>
    </source>
</evidence>
<name>SLEB_PROMU</name>